<proteinExistence type="inferred from homology"/>
<reference key="1">
    <citation type="journal article" date="2007" name="PLoS Genet.">
        <title>Patterns and implications of gene gain and loss in the evolution of Prochlorococcus.</title>
        <authorList>
            <person name="Kettler G.C."/>
            <person name="Martiny A.C."/>
            <person name="Huang K."/>
            <person name="Zucker J."/>
            <person name="Coleman M.L."/>
            <person name="Rodrigue S."/>
            <person name="Chen F."/>
            <person name="Lapidus A."/>
            <person name="Ferriera S."/>
            <person name="Johnson J."/>
            <person name="Steglich C."/>
            <person name="Church G.M."/>
            <person name="Richardson P."/>
            <person name="Chisholm S.W."/>
        </authorList>
    </citation>
    <scope>NUCLEOTIDE SEQUENCE [LARGE SCALE GENOMIC DNA]</scope>
    <source>
        <strain>MIT 9515</strain>
    </source>
</reference>
<protein>
    <recommendedName>
        <fullName evidence="2">Cytochrome c biogenesis protein CcsA</fullName>
    </recommendedName>
</protein>
<gene>
    <name evidence="2" type="primary">ccsA</name>
    <name type="ordered locus">P9515_08181</name>
</gene>
<keyword id="KW-0201">Cytochrome c-type biogenesis</keyword>
<keyword id="KW-0472">Membrane</keyword>
<keyword id="KW-0793">Thylakoid</keyword>
<keyword id="KW-0812">Transmembrane</keyword>
<keyword id="KW-1133">Transmembrane helix</keyword>
<name>CCSA_PROM5</name>
<comment type="function">
    <text evidence="2">Required during biogenesis of c-type cytochromes (cytochrome c6 and cytochrome f) at the step of heme attachment.</text>
</comment>
<comment type="subunit">
    <text evidence="1">May interact with ccs1.</text>
</comment>
<comment type="subcellular location">
    <subcellularLocation>
        <location evidence="2">Cellular thylakoid membrane</location>
        <topology evidence="2">Multi-pass membrane protein</topology>
    </subcellularLocation>
</comment>
<comment type="similarity">
    <text evidence="2">Belongs to the CcmF/CycK/Ccl1/NrfE/CcsA family.</text>
</comment>
<evidence type="ECO:0000250" key="1"/>
<evidence type="ECO:0000255" key="2">
    <source>
        <dbReference type="HAMAP-Rule" id="MF_01391"/>
    </source>
</evidence>
<organism>
    <name type="scientific">Prochlorococcus marinus (strain MIT 9515)</name>
    <dbReference type="NCBI Taxonomy" id="167542"/>
    <lineage>
        <taxon>Bacteria</taxon>
        <taxon>Bacillati</taxon>
        <taxon>Cyanobacteriota</taxon>
        <taxon>Cyanophyceae</taxon>
        <taxon>Synechococcales</taxon>
        <taxon>Prochlorococcaceae</taxon>
        <taxon>Prochlorococcus</taxon>
    </lineage>
</organism>
<feature type="chain" id="PRO_0000353710" description="Cytochrome c biogenesis protein CcsA">
    <location>
        <begin position="1"/>
        <end position="312"/>
    </location>
</feature>
<feature type="transmembrane region" description="Helical" evidence="2">
    <location>
        <begin position="18"/>
        <end position="38"/>
    </location>
</feature>
<feature type="transmembrane region" description="Helical" evidence="2">
    <location>
        <begin position="48"/>
        <end position="68"/>
    </location>
</feature>
<feature type="transmembrane region" description="Helical" evidence="2">
    <location>
        <begin position="73"/>
        <end position="93"/>
    </location>
</feature>
<feature type="transmembrane region" description="Helical" evidence="2">
    <location>
        <begin position="102"/>
        <end position="122"/>
    </location>
</feature>
<feature type="transmembrane region" description="Helical" evidence="2">
    <location>
        <begin position="148"/>
        <end position="168"/>
    </location>
</feature>
<feature type="transmembrane region" description="Helical" evidence="2">
    <location>
        <begin position="216"/>
        <end position="236"/>
    </location>
</feature>
<feature type="transmembrane region" description="Helical" evidence="2">
    <location>
        <begin position="250"/>
        <end position="267"/>
    </location>
</feature>
<feature type="transmembrane region" description="Helical" evidence="2">
    <location>
        <begin position="279"/>
        <end position="299"/>
    </location>
</feature>
<accession>A2BW66</accession>
<sequence length="312" mass="35391">MIFDGFIKNLIYDPVSTLGILIFYFLLINLPISLLALFNKKSSSFVRFFTILINLFIALQLIFRWILSGHFPISNLYESLYFLVWGISLGQLLVEKEYPNPIIPVIAIPIELLTIAFACFVLPDDLKLSSNLVPALRSSWLIMHVSVVMLSYAALIIGSLLSASVLFINNRQPLQLRSSSTGIGGFRMSNEYSGNNFNEPINFTHTEELDTLSYRSILVGFVLLTLGLITGAIWANEAWGTWWSWDPKETWAFISWLFYAAYLHMRISRGWQGRRPALFATSGFFVVLICYLGVNFLGIGLHSYGWIFGILN</sequence>
<dbReference type="EMBL" id="CP000552">
    <property type="protein sequence ID" value="ABM72027.1"/>
    <property type="molecule type" value="Genomic_DNA"/>
</dbReference>
<dbReference type="RefSeq" id="WP_011820132.1">
    <property type="nucleotide sequence ID" value="NC_008817.1"/>
</dbReference>
<dbReference type="SMR" id="A2BW66"/>
<dbReference type="STRING" id="167542.P9515_08181"/>
<dbReference type="GeneID" id="60202174"/>
<dbReference type="KEGG" id="pmc:P9515_08181"/>
<dbReference type="eggNOG" id="COG0755">
    <property type="taxonomic scope" value="Bacteria"/>
</dbReference>
<dbReference type="HOGENOM" id="CLU_049710_2_4_3"/>
<dbReference type="OrthoDB" id="9814290at2"/>
<dbReference type="Proteomes" id="UP000001589">
    <property type="component" value="Chromosome"/>
</dbReference>
<dbReference type="GO" id="GO:0031676">
    <property type="term" value="C:plasma membrane-derived thylakoid membrane"/>
    <property type="evidence" value="ECO:0007669"/>
    <property type="project" value="UniProtKB-SubCell"/>
</dbReference>
<dbReference type="GO" id="GO:0020037">
    <property type="term" value="F:heme binding"/>
    <property type="evidence" value="ECO:0007669"/>
    <property type="project" value="InterPro"/>
</dbReference>
<dbReference type="GO" id="GO:0017004">
    <property type="term" value="P:cytochrome complex assembly"/>
    <property type="evidence" value="ECO:0007669"/>
    <property type="project" value="UniProtKB-UniRule"/>
</dbReference>
<dbReference type="HAMAP" id="MF_01391">
    <property type="entry name" value="CytC_CcsA"/>
    <property type="match status" value="1"/>
</dbReference>
<dbReference type="InterPro" id="IPR002541">
    <property type="entry name" value="Cyt_c_assembly"/>
</dbReference>
<dbReference type="InterPro" id="IPR017562">
    <property type="entry name" value="Cyt_c_biogenesis_CcsA"/>
</dbReference>
<dbReference type="InterPro" id="IPR045062">
    <property type="entry name" value="Cyt_c_biogenesis_CcsA/CcmC"/>
</dbReference>
<dbReference type="NCBIfam" id="TIGR03144">
    <property type="entry name" value="cytochr_II_ccsB"/>
    <property type="match status" value="1"/>
</dbReference>
<dbReference type="PANTHER" id="PTHR30071:SF1">
    <property type="entry name" value="CYTOCHROME B_B6 PROTEIN-RELATED"/>
    <property type="match status" value="1"/>
</dbReference>
<dbReference type="PANTHER" id="PTHR30071">
    <property type="entry name" value="HEME EXPORTER PROTEIN C"/>
    <property type="match status" value="1"/>
</dbReference>
<dbReference type="Pfam" id="PF01578">
    <property type="entry name" value="Cytochrom_C_asm"/>
    <property type="match status" value="1"/>
</dbReference>